<evidence type="ECO:0000255" key="1">
    <source>
        <dbReference type="HAMAP-Rule" id="MF_01318"/>
    </source>
</evidence>
<evidence type="ECO:0000305" key="2"/>
<gene>
    <name evidence="1" type="primary">rplA</name>
    <name type="ordered locus">ECDH10B_4172</name>
</gene>
<organism>
    <name type="scientific">Escherichia coli (strain K12 / DH10B)</name>
    <dbReference type="NCBI Taxonomy" id="316385"/>
    <lineage>
        <taxon>Bacteria</taxon>
        <taxon>Pseudomonadati</taxon>
        <taxon>Pseudomonadota</taxon>
        <taxon>Gammaproteobacteria</taxon>
        <taxon>Enterobacterales</taxon>
        <taxon>Enterobacteriaceae</taxon>
        <taxon>Escherichia</taxon>
    </lineage>
</organism>
<protein>
    <recommendedName>
        <fullName evidence="1">Large ribosomal subunit protein uL1</fullName>
    </recommendedName>
    <alternativeName>
        <fullName evidence="2">50S ribosomal protein L1</fullName>
    </alternativeName>
</protein>
<feature type="chain" id="PRO_1000141400" description="Large ribosomal subunit protein uL1">
    <location>
        <begin position="1"/>
        <end position="234"/>
    </location>
</feature>
<name>RL1_ECODH</name>
<accession>B1XBY6</accession>
<reference key="1">
    <citation type="journal article" date="2008" name="J. Bacteriol.">
        <title>The complete genome sequence of Escherichia coli DH10B: insights into the biology of a laboratory workhorse.</title>
        <authorList>
            <person name="Durfee T."/>
            <person name="Nelson R."/>
            <person name="Baldwin S."/>
            <person name="Plunkett G. III"/>
            <person name="Burland V."/>
            <person name="Mau B."/>
            <person name="Petrosino J.F."/>
            <person name="Qin X."/>
            <person name="Muzny D.M."/>
            <person name="Ayele M."/>
            <person name="Gibbs R.A."/>
            <person name="Csorgo B."/>
            <person name="Posfai G."/>
            <person name="Weinstock G.M."/>
            <person name="Blattner F.R."/>
        </authorList>
    </citation>
    <scope>NUCLEOTIDE SEQUENCE [LARGE SCALE GENOMIC DNA]</scope>
    <source>
        <strain>K12 / DH10B</strain>
    </source>
</reference>
<dbReference type="EMBL" id="CP000948">
    <property type="protein sequence ID" value="ACB04986.1"/>
    <property type="molecule type" value="Genomic_DNA"/>
</dbReference>
<dbReference type="RefSeq" id="WP_001096684.1">
    <property type="nucleotide sequence ID" value="NC_010473.1"/>
</dbReference>
<dbReference type="SMR" id="B1XBY6"/>
<dbReference type="GeneID" id="93777910"/>
<dbReference type="KEGG" id="ecd:ECDH10B_4172"/>
<dbReference type="HOGENOM" id="CLU_062853_0_0_6"/>
<dbReference type="GO" id="GO:0022625">
    <property type="term" value="C:cytosolic large ribosomal subunit"/>
    <property type="evidence" value="ECO:0007669"/>
    <property type="project" value="TreeGrafter"/>
</dbReference>
<dbReference type="GO" id="GO:0019843">
    <property type="term" value="F:rRNA binding"/>
    <property type="evidence" value="ECO:0007669"/>
    <property type="project" value="UniProtKB-UniRule"/>
</dbReference>
<dbReference type="GO" id="GO:0003735">
    <property type="term" value="F:structural constituent of ribosome"/>
    <property type="evidence" value="ECO:0007669"/>
    <property type="project" value="InterPro"/>
</dbReference>
<dbReference type="GO" id="GO:0000049">
    <property type="term" value="F:tRNA binding"/>
    <property type="evidence" value="ECO:0007669"/>
    <property type="project" value="UniProtKB-KW"/>
</dbReference>
<dbReference type="GO" id="GO:0006417">
    <property type="term" value="P:regulation of translation"/>
    <property type="evidence" value="ECO:0007669"/>
    <property type="project" value="UniProtKB-KW"/>
</dbReference>
<dbReference type="GO" id="GO:0006412">
    <property type="term" value="P:translation"/>
    <property type="evidence" value="ECO:0007669"/>
    <property type="project" value="UniProtKB-UniRule"/>
</dbReference>
<dbReference type="CDD" id="cd00403">
    <property type="entry name" value="Ribosomal_L1"/>
    <property type="match status" value="1"/>
</dbReference>
<dbReference type="FunFam" id="3.40.50.790:FF:000001">
    <property type="entry name" value="50S ribosomal protein L1"/>
    <property type="match status" value="1"/>
</dbReference>
<dbReference type="Gene3D" id="3.30.190.20">
    <property type="match status" value="1"/>
</dbReference>
<dbReference type="Gene3D" id="3.40.50.790">
    <property type="match status" value="1"/>
</dbReference>
<dbReference type="HAMAP" id="MF_01318_B">
    <property type="entry name" value="Ribosomal_uL1_B"/>
    <property type="match status" value="1"/>
</dbReference>
<dbReference type="InterPro" id="IPR005878">
    <property type="entry name" value="Ribosom_uL1_bac-type"/>
</dbReference>
<dbReference type="InterPro" id="IPR002143">
    <property type="entry name" value="Ribosomal_uL1"/>
</dbReference>
<dbReference type="InterPro" id="IPR023674">
    <property type="entry name" value="Ribosomal_uL1-like"/>
</dbReference>
<dbReference type="InterPro" id="IPR028364">
    <property type="entry name" value="Ribosomal_uL1/biogenesis"/>
</dbReference>
<dbReference type="InterPro" id="IPR016095">
    <property type="entry name" value="Ribosomal_uL1_3-a/b-sand"/>
</dbReference>
<dbReference type="InterPro" id="IPR023673">
    <property type="entry name" value="Ribosomal_uL1_CS"/>
</dbReference>
<dbReference type="NCBIfam" id="TIGR01169">
    <property type="entry name" value="rplA_bact"/>
    <property type="match status" value="1"/>
</dbReference>
<dbReference type="PANTHER" id="PTHR36427">
    <property type="entry name" value="54S RIBOSOMAL PROTEIN L1, MITOCHONDRIAL"/>
    <property type="match status" value="1"/>
</dbReference>
<dbReference type="PANTHER" id="PTHR36427:SF3">
    <property type="entry name" value="LARGE RIBOSOMAL SUBUNIT PROTEIN UL1M"/>
    <property type="match status" value="1"/>
</dbReference>
<dbReference type="Pfam" id="PF00687">
    <property type="entry name" value="Ribosomal_L1"/>
    <property type="match status" value="1"/>
</dbReference>
<dbReference type="PIRSF" id="PIRSF002155">
    <property type="entry name" value="Ribosomal_L1"/>
    <property type="match status" value="1"/>
</dbReference>
<dbReference type="SUPFAM" id="SSF56808">
    <property type="entry name" value="Ribosomal protein L1"/>
    <property type="match status" value="1"/>
</dbReference>
<dbReference type="PROSITE" id="PS01199">
    <property type="entry name" value="RIBOSOMAL_L1"/>
    <property type="match status" value="1"/>
</dbReference>
<comment type="function">
    <text evidence="1">Binds directly to 23S rRNA. The L1 stalk is quite mobile in the ribosome, and is involved in E site tRNA release.</text>
</comment>
<comment type="function">
    <text evidence="1">Protein L1 is also a translational repressor protein, it controls the translation of the L11 operon by binding to its mRNA.</text>
</comment>
<comment type="subunit">
    <text evidence="1">Part of the 50S ribosomal subunit.</text>
</comment>
<comment type="similarity">
    <text evidence="1">Belongs to the universal ribosomal protein uL1 family.</text>
</comment>
<sequence>MAKLTKRMRVIREKVDATKQYDINEAIALLKELATAKFVESVDVAVNLGIDARKSDQNVRGATVLPHGTGRSVRVAVFTQGANAEAAKAAGAELVGMEDLADQIKKGEMNFDVVIASPDAMRVVGQLGQVLGPRGLMPNPKVGTVTPNVAEAVKNAKAGQVRYRNDKNGIIHTTIGKVDFDADKLKENLEALLVALKKAKPTQAKGVYIKKVSISTTMGAGVAVDQAGLSASVN</sequence>
<keyword id="KW-0678">Repressor</keyword>
<keyword id="KW-0687">Ribonucleoprotein</keyword>
<keyword id="KW-0689">Ribosomal protein</keyword>
<keyword id="KW-0694">RNA-binding</keyword>
<keyword id="KW-0699">rRNA-binding</keyword>
<keyword id="KW-0810">Translation regulation</keyword>
<keyword id="KW-0820">tRNA-binding</keyword>
<proteinExistence type="inferred from homology"/>